<sequence>MTKSELIERIVTHQGQLSAKDVELAIKTMLEQMSQALATGDRIEIRGFGSFSLHYRAPRVGRNPKTGESVRLDGKFVPHFKPGKELRDRVNEPE</sequence>
<protein>
    <recommendedName>
        <fullName evidence="1">Integration host factor subunit beta</fullName>
        <shortName evidence="1">IHF-beta</shortName>
    </recommendedName>
</protein>
<keyword id="KW-0233">DNA recombination</keyword>
<keyword id="KW-0238">DNA-binding</keyword>
<keyword id="KW-0804">Transcription</keyword>
<keyword id="KW-0805">Transcription regulation</keyword>
<keyword id="KW-0810">Translation regulation</keyword>
<proteinExistence type="inferred from homology"/>
<organism>
    <name type="scientific">Pseudomonas aeruginosa (strain LESB58)</name>
    <dbReference type="NCBI Taxonomy" id="557722"/>
    <lineage>
        <taxon>Bacteria</taxon>
        <taxon>Pseudomonadati</taxon>
        <taxon>Pseudomonadota</taxon>
        <taxon>Gammaproteobacteria</taxon>
        <taxon>Pseudomonadales</taxon>
        <taxon>Pseudomonadaceae</taxon>
        <taxon>Pseudomonas</taxon>
    </lineage>
</organism>
<name>IHFB_PSEA8</name>
<feature type="chain" id="PRO_1000122226" description="Integration host factor subunit beta">
    <location>
        <begin position="1"/>
        <end position="94"/>
    </location>
</feature>
<dbReference type="EMBL" id="FM209186">
    <property type="protein sequence ID" value="CAW26635.1"/>
    <property type="molecule type" value="Genomic_DNA"/>
</dbReference>
<dbReference type="RefSeq" id="WP_003091441.1">
    <property type="nucleotide sequence ID" value="NC_011770.1"/>
</dbReference>
<dbReference type="SMR" id="B7VAL8"/>
<dbReference type="GeneID" id="79914974"/>
<dbReference type="KEGG" id="pag:PLES_19071"/>
<dbReference type="HOGENOM" id="CLU_105066_2_0_6"/>
<dbReference type="GO" id="GO:0005694">
    <property type="term" value="C:chromosome"/>
    <property type="evidence" value="ECO:0007669"/>
    <property type="project" value="InterPro"/>
</dbReference>
<dbReference type="GO" id="GO:0005829">
    <property type="term" value="C:cytosol"/>
    <property type="evidence" value="ECO:0007669"/>
    <property type="project" value="TreeGrafter"/>
</dbReference>
<dbReference type="GO" id="GO:0003677">
    <property type="term" value="F:DNA binding"/>
    <property type="evidence" value="ECO:0007669"/>
    <property type="project" value="UniProtKB-UniRule"/>
</dbReference>
<dbReference type="GO" id="GO:0030527">
    <property type="term" value="F:structural constituent of chromatin"/>
    <property type="evidence" value="ECO:0007669"/>
    <property type="project" value="InterPro"/>
</dbReference>
<dbReference type="GO" id="GO:0006310">
    <property type="term" value="P:DNA recombination"/>
    <property type="evidence" value="ECO:0007669"/>
    <property type="project" value="UniProtKB-UniRule"/>
</dbReference>
<dbReference type="GO" id="GO:0006355">
    <property type="term" value="P:regulation of DNA-templated transcription"/>
    <property type="evidence" value="ECO:0007669"/>
    <property type="project" value="UniProtKB-UniRule"/>
</dbReference>
<dbReference type="GO" id="GO:0006417">
    <property type="term" value="P:regulation of translation"/>
    <property type="evidence" value="ECO:0007669"/>
    <property type="project" value="UniProtKB-UniRule"/>
</dbReference>
<dbReference type="CDD" id="cd13836">
    <property type="entry name" value="IHF_B"/>
    <property type="match status" value="1"/>
</dbReference>
<dbReference type="FunFam" id="4.10.520.10:FF:000003">
    <property type="entry name" value="Integration host factor subunit beta"/>
    <property type="match status" value="1"/>
</dbReference>
<dbReference type="Gene3D" id="4.10.520.10">
    <property type="entry name" value="IHF-like DNA-binding proteins"/>
    <property type="match status" value="1"/>
</dbReference>
<dbReference type="HAMAP" id="MF_00381">
    <property type="entry name" value="IHF_beta"/>
    <property type="match status" value="1"/>
</dbReference>
<dbReference type="InterPro" id="IPR000119">
    <property type="entry name" value="Hist_DNA-bd"/>
</dbReference>
<dbReference type="InterPro" id="IPR020816">
    <property type="entry name" value="Histone-like_DNA-bd_CS"/>
</dbReference>
<dbReference type="InterPro" id="IPR010992">
    <property type="entry name" value="IHF-like_DNA-bd_dom_sf"/>
</dbReference>
<dbReference type="InterPro" id="IPR005685">
    <property type="entry name" value="IHF_beta"/>
</dbReference>
<dbReference type="NCBIfam" id="TIGR00988">
    <property type="entry name" value="hip"/>
    <property type="match status" value="1"/>
</dbReference>
<dbReference type="NCBIfam" id="NF001222">
    <property type="entry name" value="PRK00199.1"/>
    <property type="match status" value="1"/>
</dbReference>
<dbReference type="PANTHER" id="PTHR33175">
    <property type="entry name" value="DNA-BINDING PROTEIN HU"/>
    <property type="match status" value="1"/>
</dbReference>
<dbReference type="PANTHER" id="PTHR33175:SF5">
    <property type="entry name" value="INTEGRATION HOST FACTOR SUBUNIT BETA"/>
    <property type="match status" value="1"/>
</dbReference>
<dbReference type="Pfam" id="PF00216">
    <property type="entry name" value="Bac_DNA_binding"/>
    <property type="match status" value="1"/>
</dbReference>
<dbReference type="PRINTS" id="PR01727">
    <property type="entry name" value="DNABINDINGHU"/>
</dbReference>
<dbReference type="SMART" id="SM00411">
    <property type="entry name" value="BHL"/>
    <property type="match status" value="1"/>
</dbReference>
<dbReference type="SUPFAM" id="SSF47729">
    <property type="entry name" value="IHF-like DNA-binding proteins"/>
    <property type="match status" value="1"/>
</dbReference>
<dbReference type="PROSITE" id="PS00045">
    <property type="entry name" value="HISTONE_LIKE"/>
    <property type="match status" value="1"/>
</dbReference>
<evidence type="ECO:0000255" key="1">
    <source>
        <dbReference type="HAMAP-Rule" id="MF_00381"/>
    </source>
</evidence>
<gene>
    <name evidence="1" type="primary">ihfB</name>
    <name evidence="1" type="synonym">himD</name>
    <name type="ordered locus">PLES_19071</name>
</gene>
<comment type="function">
    <text evidence="1">This protein is one of the two subunits of integration host factor, a specific DNA-binding protein that functions in genetic recombination as well as in transcriptional and translational control.</text>
</comment>
<comment type="subunit">
    <text evidence="1">Heterodimer of an alpha and a beta chain.</text>
</comment>
<comment type="similarity">
    <text evidence="1">Belongs to the bacterial histone-like protein family.</text>
</comment>
<reference key="1">
    <citation type="journal article" date="2009" name="Genome Res.">
        <title>Newly introduced genomic prophage islands are critical determinants of in vivo competitiveness in the Liverpool epidemic strain of Pseudomonas aeruginosa.</title>
        <authorList>
            <person name="Winstanley C."/>
            <person name="Langille M.G.I."/>
            <person name="Fothergill J.L."/>
            <person name="Kukavica-Ibrulj I."/>
            <person name="Paradis-Bleau C."/>
            <person name="Sanschagrin F."/>
            <person name="Thomson N.R."/>
            <person name="Winsor G.L."/>
            <person name="Quail M.A."/>
            <person name="Lennard N."/>
            <person name="Bignell A."/>
            <person name="Clarke L."/>
            <person name="Seeger K."/>
            <person name="Saunders D."/>
            <person name="Harris D."/>
            <person name="Parkhill J."/>
            <person name="Hancock R.E.W."/>
            <person name="Brinkman F.S.L."/>
            <person name="Levesque R.C."/>
        </authorList>
    </citation>
    <scope>NUCLEOTIDE SEQUENCE [LARGE SCALE GENOMIC DNA]</scope>
    <source>
        <strain>LESB58</strain>
    </source>
</reference>
<accession>B7VAL8</accession>